<reference key="1">
    <citation type="journal article" date="2008" name="BMC Res. Notes">
        <title>The complete chloroplast genome sequence of Brachypodium distachyon: sequence comparison and phylogenetic analysis of eight grass plastomes.</title>
        <authorList>
            <person name="Bortiri E."/>
            <person name="Coleman-Derr D."/>
            <person name="Lazo G.R."/>
            <person name="Anderson O.D."/>
            <person name="Gu Y.Q."/>
        </authorList>
    </citation>
    <scope>NUCLEOTIDE SEQUENCE [LARGE SCALE GENOMIC DNA]</scope>
    <source>
        <strain>cv. Bd21</strain>
    </source>
</reference>
<dbReference type="EC" id="7.1.1.-" evidence="1"/>
<dbReference type="EMBL" id="EU325680">
    <property type="protein sequence ID" value="ACF08693.1"/>
    <property type="molecule type" value="Genomic_DNA"/>
</dbReference>
<dbReference type="RefSeq" id="YP_002000541.1">
    <property type="nucleotide sequence ID" value="NC_011032.1"/>
</dbReference>
<dbReference type="SMR" id="B3TNA5"/>
<dbReference type="FunCoup" id="B3TNA5">
    <property type="interactions" value="13"/>
</dbReference>
<dbReference type="STRING" id="15368.B3TNA5"/>
<dbReference type="GeneID" id="6439817"/>
<dbReference type="KEGG" id="bdi:6439817"/>
<dbReference type="eggNOG" id="KOG2870">
    <property type="taxonomic scope" value="Eukaryota"/>
</dbReference>
<dbReference type="HOGENOM" id="CLU_015134_1_2_1"/>
<dbReference type="InParanoid" id="B3TNA5"/>
<dbReference type="OMA" id="TRMDYLT"/>
<dbReference type="Proteomes" id="UP000008810">
    <property type="component" value="Chloroplast"/>
</dbReference>
<dbReference type="ExpressionAtlas" id="B3TNA5">
    <property type="expression patterns" value="baseline and differential"/>
</dbReference>
<dbReference type="GO" id="GO:0009535">
    <property type="term" value="C:chloroplast thylakoid membrane"/>
    <property type="evidence" value="ECO:0007669"/>
    <property type="project" value="UniProtKB-SubCell"/>
</dbReference>
<dbReference type="GO" id="GO:0051287">
    <property type="term" value="F:NAD binding"/>
    <property type="evidence" value="ECO:0007669"/>
    <property type="project" value="InterPro"/>
</dbReference>
<dbReference type="GO" id="GO:0016655">
    <property type="term" value="F:oxidoreductase activity, acting on NAD(P)H, quinone or similar compound as acceptor"/>
    <property type="evidence" value="ECO:0007669"/>
    <property type="project" value="UniProtKB-UniRule"/>
</dbReference>
<dbReference type="GO" id="GO:0048038">
    <property type="term" value="F:quinone binding"/>
    <property type="evidence" value="ECO:0007669"/>
    <property type="project" value="UniProtKB-KW"/>
</dbReference>
<dbReference type="GO" id="GO:0019684">
    <property type="term" value="P:photosynthesis, light reaction"/>
    <property type="evidence" value="ECO:0007669"/>
    <property type="project" value="UniProtKB-UniRule"/>
</dbReference>
<dbReference type="Gene3D" id="1.10.645.10">
    <property type="entry name" value="Cytochrome-c3 Hydrogenase, chain B"/>
    <property type="match status" value="1"/>
</dbReference>
<dbReference type="HAMAP" id="MF_01358">
    <property type="entry name" value="NDH1_NuoD"/>
    <property type="match status" value="1"/>
</dbReference>
<dbReference type="InterPro" id="IPR001135">
    <property type="entry name" value="NADH_Q_OxRdtase_suD"/>
</dbReference>
<dbReference type="InterPro" id="IPR014029">
    <property type="entry name" value="NADH_UbQ_OxRdtase_49kDa_CS"/>
</dbReference>
<dbReference type="InterPro" id="IPR022885">
    <property type="entry name" value="NDH1_su_D/H"/>
</dbReference>
<dbReference type="InterPro" id="IPR029014">
    <property type="entry name" value="NiFe-Hase_large"/>
</dbReference>
<dbReference type="NCBIfam" id="NF004739">
    <property type="entry name" value="PRK06075.1"/>
    <property type="match status" value="1"/>
</dbReference>
<dbReference type="NCBIfam" id="NF005649">
    <property type="entry name" value="PRK07415.1"/>
    <property type="match status" value="1"/>
</dbReference>
<dbReference type="PANTHER" id="PTHR11993:SF10">
    <property type="entry name" value="NADH DEHYDROGENASE [UBIQUINONE] IRON-SULFUR PROTEIN 2, MITOCHONDRIAL"/>
    <property type="match status" value="1"/>
</dbReference>
<dbReference type="PANTHER" id="PTHR11993">
    <property type="entry name" value="NADH-UBIQUINONE OXIDOREDUCTASE 49 KDA SUBUNIT"/>
    <property type="match status" value="1"/>
</dbReference>
<dbReference type="Pfam" id="PF00346">
    <property type="entry name" value="Complex1_49kDa"/>
    <property type="match status" value="1"/>
</dbReference>
<dbReference type="SUPFAM" id="SSF56762">
    <property type="entry name" value="HydB/Nqo4-like"/>
    <property type="match status" value="1"/>
</dbReference>
<dbReference type="PROSITE" id="PS00535">
    <property type="entry name" value="COMPLEX1_49K"/>
    <property type="match status" value="1"/>
</dbReference>
<evidence type="ECO:0000255" key="1">
    <source>
        <dbReference type="HAMAP-Rule" id="MF_01358"/>
    </source>
</evidence>
<gene>
    <name evidence="1" type="primary">ndhH</name>
</gene>
<name>NDHH_BRADI</name>
<keyword id="KW-0150">Chloroplast</keyword>
<keyword id="KW-0472">Membrane</keyword>
<keyword id="KW-0520">NAD</keyword>
<keyword id="KW-0521">NADP</keyword>
<keyword id="KW-0934">Plastid</keyword>
<keyword id="KW-0618">Plastoquinone</keyword>
<keyword id="KW-0874">Quinone</keyword>
<keyword id="KW-1185">Reference proteome</keyword>
<keyword id="KW-0793">Thylakoid</keyword>
<keyword id="KW-1278">Translocase</keyword>
<keyword id="KW-0813">Transport</keyword>
<protein>
    <recommendedName>
        <fullName evidence="1">NAD(P)H-quinone oxidoreductase subunit H, chloroplastic</fullName>
        <ecNumber evidence="1">7.1.1.-</ecNumber>
    </recommendedName>
    <alternativeName>
        <fullName>NAD(P)H dehydrogenase subunit H</fullName>
    </alternativeName>
    <alternativeName>
        <fullName evidence="1">NADH-plastoquinone oxidoreductase 49 kDa subunit</fullName>
    </alternativeName>
    <alternativeName>
        <fullName evidence="1">NADH-plastoquinone oxidoreductase subunit H</fullName>
    </alternativeName>
</protein>
<accession>B3TNA5</accession>
<comment type="function">
    <text evidence="1">NDH shuttles electrons from NAD(P)H:plastoquinone, via FMN and iron-sulfur (Fe-S) centers, to quinones in the photosynthetic chain and possibly in a chloroplast respiratory chain. The immediate electron acceptor for the enzyme in this species is believed to be plastoquinone. Couples the redox reaction to proton translocation, and thus conserves the redox energy in a proton gradient.</text>
</comment>
<comment type="catalytic activity">
    <reaction evidence="1">
        <text>a plastoquinone + NADH + (n+1) H(+)(in) = a plastoquinol + NAD(+) + n H(+)(out)</text>
        <dbReference type="Rhea" id="RHEA:42608"/>
        <dbReference type="Rhea" id="RHEA-COMP:9561"/>
        <dbReference type="Rhea" id="RHEA-COMP:9562"/>
        <dbReference type="ChEBI" id="CHEBI:15378"/>
        <dbReference type="ChEBI" id="CHEBI:17757"/>
        <dbReference type="ChEBI" id="CHEBI:57540"/>
        <dbReference type="ChEBI" id="CHEBI:57945"/>
        <dbReference type="ChEBI" id="CHEBI:62192"/>
    </reaction>
</comment>
<comment type="catalytic activity">
    <reaction evidence="1">
        <text>a plastoquinone + NADPH + (n+1) H(+)(in) = a plastoquinol + NADP(+) + n H(+)(out)</text>
        <dbReference type="Rhea" id="RHEA:42612"/>
        <dbReference type="Rhea" id="RHEA-COMP:9561"/>
        <dbReference type="Rhea" id="RHEA-COMP:9562"/>
        <dbReference type="ChEBI" id="CHEBI:15378"/>
        <dbReference type="ChEBI" id="CHEBI:17757"/>
        <dbReference type="ChEBI" id="CHEBI:57783"/>
        <dbReference type="ChEBI" id="CHEBI:58349"/>
        <dbReference type="ChEBI" id="CHEBI:62192"/>
    </reaction>
</comment>
<comment type="subunit">
    <text evidence="1">NDH is composed of at least 16 different subunits, 5 of which are encoded in the nucleus.</text>
</comment>
<comment type="subcellular location">
    <subcellularLocation>
        <location evidence="1">Plastid</location>
        <location evidence="1">Chloroplast thylakoid membrane</location>
        <topology evidence="1">Peripheral membrane protein</topology>
        <orientation evidence="1">Stromal side</orientation>
    </subcellularLocation>
</comment>
<comment type="similarity">
    <text evidence="1">Belongs to the complex I 49 kDa subunit family.</text>
</comment>
<proteinExistence type="inferred from homology"/>
<organism>
    <name type="scientific">Brachypodium distachyon</name>
    <name type="common">Purple false brome</name>
    <name type="synonym">Trachynia distachya</name>
    <dbReference type="NCBI Taxonomy" id="15368"/>
    <lineage>
        <taxon>Eukaryota</taxon>
        <taxon>Viridiplantae</taxon>
        <taxon>Streptophyta</taxon>
        <taxon>Embryophyta</taxon>
        <taxon>Tracheophyta</taxon>
        <taxon>Spermatophyta</taxon>
        <taxon>Magnoliopsida</taxon>
        <taxon>Liliopsida</taxon>
        <taxon>Poales</taxon>
        <taxon>Poaceae</taxon>
        <taxon>BOP clade</taxon>
        <taxon>Pooideae</taxon>
        <taxon>Stipodae</taxon>
        <taxon>Brachypodieae</taxon>
        <taxon>Brachypodium</taxon>
    </lineage>
</organism>
<sequence>MSLPLTRKDLMIVNMGPQHPSMHGVLRLIVTLDGEDVIDCEPILGYLHRGMEKIAENRTIIQYLPYVTRWDYLATMFTEAITVNAPEFLENIQIPQRASYIRVIMLELSRIASHLLWLGPFMADLGAQTPFFYIFRERELIYDLFEAATGMRMMHNYFRIGGVAADLPYGWIEKCLDFCDYFLRGVVEYQQLITQNPIFLERVERVGFISGEEAVNWGLSGPMLRASGIRWDLRKVDLYESYNQFGWKVQWQKEGDSLARYLVRIGEMRESIKIIQQAVEKIPGGPYENLEVRRFKKEKNSEWNDFEYRFLGKKPSPNFELSKQELYVRIEAPKGELGIYLVGDDGLFPWRWKIRPPGFINLQILPQLVKKMKLADIMTILGSIDIIMGEVDR</sequence>
<geneLocation type="chloroplast"/>
<feature type="chain" id="PRO_0000357968" description="NAD(P)H-quinone oxidoreductase subunit H, chloroplastic">
    <location>
        <begin position="1"/>
        <end position="393"/>
    </location>
</feature>